<feature type="chain" id="PRO_0000132950" description="Uncharacterized 38.7 kDa protein in PK1-LEF1 intergenic region">
    <location>
        <begin position="1"/>
        <end position="327"/>
    </location>
</feature>
<proteinExistence type="predicted"/>
<name>Y013_NPVAC</name>
<organismHost>
    <name type="scientific">Lepidoptera</name>
    <name type="common">butterflies and moths</name>
    <dbReference type="NCBI Taxonomy" id="7088"/>
</organismHost>
<organism>
    <name type="scientific">Autographa californica nuclear polyhedrosis virus</name>
    <name type="common">AcMNPV</name>
    <dbReference type="NCBI Taxonomy" id="46015"/>
    <lineage>
        <taxon>Viruses</taxon>
        <taxon>Viruses incertae sedis</taxon>
        <taxon>Naldaviricetes</taxon>
        <taxon>Lefavirales</taxon>
        <taxon>Baculoviridae</taxon>
        <taxon>Alphabaculovirus</taxon>
        <taxon>Alphabaculovirus aucalifornicae</taxon>
    </lineage>
</organism>
<accession>P41423</accession>
<sequence length="327" mass="38660">MLSWLWNWWMWSGDNDNDAIAAEDRFNADDYKKYHINAQQWSHIVKWDSFKCNTHSFKYRYVHSDTNAKCYNVIDFCKGLEIAHDDILDCNWDGDQVYHLNEIVFHKQRSKRDLNSLGALFATKHGLLEILMRLNFANKSNALLHIQTEGERDDLRDKIESVLKHVKKLNANSEKFMVTHETFKNEVGNRFEQFELRLHELDAKLNMLQSAEKLKTAVVAESKNGTVTFPRDITKHQHLAVFSERIDDRIKLAFVLGQERHFRKRKMRFEDDMEVLYDGVHPNPLLAIQCINEKLYDKHYKIRKIAKRVIDVDCTPNVVREVIQEVL</sequence>
<protein>
    <recommendedName>
        <fullName>Uncharacterized 38.7 kDa protein in PK1-LEF1 intergenic region</fullName>
    </recommendedName>
</protein>
<reference key="1">
    <citation type="journal article" date="1994" name="Virology">
        <title>The complete DNA sequence of Autographa californica nuclear polyhedrosis virus.</title>
        <authorList>
            <person name="Ayres M.D."/>
            <person name="Howard S.C."/>
            <person name="Kuzio J."/>
            <person name="Lopez-Ferber M."/>
            <person name="Possee R.D."/>
        </authorList>
    </citation>
    <scope>NUCLEOTIDE SEQUENCE [LARGE SCALE GENOMIC DNA]</scope>
    <source>
        <strain>C6</strain>
    </source>
</reference>
<reference key="2">
    <citation type="journal article" date="1993" name="J. Virol.">
        <title>Identification and characterization of lef-1, a baculovirus gene involved in late and very late gene expression.</title>
        <authorList>
            <person name="Passarelli A.L."/>
            <person name="Miller L.K."/>
        </authorList>
    </citation>
    <scope>NUCLEOTIDE SEQUENCE [GENOMIC DNA] OF 1-209</scope>
    <source>
        <strain>L1</strain>
    </source>
</reference>
<dbReference type="EMBL" id="L22858">
    <property type="protein sequence ID" value="AAA66643.1"/>
    <property type="molecule type" value="Genomic_DNA"/>
</dbReference>
<dbReference type="EMBL" id="L09723">
    <property type="protein sequence ID" value="AAA46706.1"/>
    <property type="molecule type" value="Genomic_DNA"/>
</dbReference>
<dbReference type="PIR" id="E72851">
    <property type="entry name" value="E72851"/>
</dbReference>
<dbReference type="RefSeq" id="NP_054042.1">
    <property type="nucleotide sequence ID" value="NC_001623.1"/>
</dbReference>
<dbReference type="SMR" id="P41423"/>
<dbReference type="GeneID" id="1403845"/>
<dbReference type="KEGG" id="vg:1403845"/>
<dbReference type="OrthoDB" id="7030at10239"/>
<dbReference type="Proteomes" id="UP000008292">
    <property type="component" value="Segment"/>
</dbReference>
<dbReference type="InterPro" id="IPR022549">
    <property type="entry name" value="DUF3627"/>
</dbReference>
<dbReference type="Pfam" id="PF12299">
    <property type="entry name" value="DUF3627"/>
    <property type="match status" value="1"/>
</dbReference>
<keyword id="KW-1185">Reference proteome</keyword>